<protein>
    <recommendedName>
        <fullName evidence="1">PF03932 family protein CutC</fullName>
    </recommendedName>
</protein>
<proteinExistence type="inferred from homology"/>
<comment type="subcellular location">
    <subcellularLocation>
        <location evidence="1">Cytoplasm</location>
    </subcellularLocation>
</comment>
<comment type="similarity">
    <text evidence="1">Belongs to the CutC family.</text>
</comment>
<comment type="caution">
    <text evidence="1">Once thought to be involved in copper homeostasis, experiments in E.coli have shown this is not the case.</text>
</comment>
<keyword id="KW-0963">Cytoplasm</keyword>
<name>CUTC_VIBA3</name>
<sequence>MNTEIEVCIDNLESLYNALSGGANRIELCSSLALGGLTPSFGMMKQAAKISSVPVYAMIRPRQGDFIFDYDDILCMLEDIEACARAGVNGVVLGVLTPDGEIDMSAMQILSSKAHQLKLAITFHRAIDQLQDYKVPLEQIIELGCERILTSGLAINAEQGINVLADMVKQADGRIDIMAGAGVNATNAKMIQSTTQVPALHLSGKSTRPSLMESNSSAQMGSNDVDDYQIPVTDANKISNVRAALTA</sequence>
<evidence type="ECO:0000255" key="1">
    <source>
        <dbReference type="HAMAP-Rule" id="MF_00795"/>
    </source>
</evidence>
<evidence type="ECO:0000256" key="2">
    <source>
        <dbReference type="SAM" id="MobiDB-lite"/>
    </source>
</evidence>
<reference key="1">
    <citation type="submission" date="2009-02" db="EMBL/GenBank/DDBJ databases">
        <title>Vibrio splendidus str. LGP32 complete genome.</title>
        <authorList>
            <person name="Mazel D."/>
            <person name="Le Roux F."/>
        </authorList>
    </citation>
    <scope>NUCLEOTIDE SEQUENCE [LARGE SCALE GENOMIC DNA]</scope>
    <source>
        <strain>LGP32</strain>
    </source>
</reference>
<gene>
    <name evidence="1" type="primary">cutC</name>
    <name type="ordered locus">VS_0592</name>
</gene>
<organism>
    <name type="scientific">Vibrio atlanticus (strain LGP32)</name>
    <name type="common">Vibrio splendidus (strain Mel32)</name>
    <dbReference type="NCBI Taxonomy" id="575788"/>
    <lineage>
        <taxon>Bacteria</taxon>
        <taxon>Pseudomonadati</taxon>
        <taxon>Pseudomonadota</taxon>
        <taxon>Gammaproteobacteria</taxon>
        <taxon>Vibrionales</taxon>
        <taxon>Vibrionaceae</taxon>
        <taxon>Vibrio</taxon>
    </lineage>
</organism>
<feature type="chain" id="PRO_1000148519" description="PF03932 family protein CutC">
    <location>
        <begin position="1"/>
        <end position="247"/>
    </location>
</feature>
<feature type="region of interest" description="Disordered" evidence="2">
    <location>
        <begin position="205"/>
        <end position="226"/>
    </location>
</feature>
<feature type="compositionally biased region" description="Polar residues" evidence="2">
    <location>
        <begin position="205"/>
        <end position="222"/>
    </location>
</feature>
<accession>B7VJR1</accession>
<dbReference type="EMBL" id="FM954972">
    <property type="protein sequence ID" value="CAV17585.1"/>
    <property type="molecule type" value="Genomic_DNA"/>
</dbReference>
<dbReference type="SMR" id="B7VJR1"/>
<dbReference type="STRING" id="575788.VS_0592"/>
<dbReference type="KEGG" id="vsp:VS_0592"/>
<dbReference type="PATRIC" id="fig|575788.5.peg.1946"/>
<dbReference type="eggNOG" id="COG3142">
    <property type="taxonomic scope" value="Bacteria"/>
</dbReference>
<dbReference type="HOGENOM" id="CLU_050555_3_1_6"/>
<dbReference type="Proteomes" id="UP000009100">
    <property type="component" value="Chromosome 1"/>
</dbReference>
<dbReference type="GO" id="GO:0005737">
    <property type="term" value="C:cytoplasm"/>
    <property type="evidence" value="ECO:0007669"/>
    <property type="project" value="UniProtKB-SubCell"/>
</dbReference>
<dbReference type="GO" id="GO:0005507">
    <property type="term" value="F:copper ion binding"/>
    <property type="evidence" value="ECO:0007669"/>
    <property type="project" value="TreeGrafter"/>
</dbReference>
<dbReference type="FunFam" id="3.20.20.380:FF:000001">
    <property type="entry name" value="Copper homeostasis protein CutC"/>
    <property type="match status" value="1"/>
</dbReference>
<dbReference type="Gene3D" id="3.20.20.380">
    <property type="entry name" value="Copper homeostasis (CutC) domain"/>
    <property type="match status" value="1"/>
</dbReference>
<dbReference type="HAMAP" id="MF_00795">
    <property type="entry name" value="CutC"/>
    <property type="match status" value="1"/>
</dbReference>
<dbReference type="InterPro" id="IPR005627">
    <property type="entry name" value="CutC-like"/>
</dbReference>
<dbReference type="InterPro" id="IPR036822">
    <property type="entry name" value="CutC-like_dom_sf"/>
</dbReference>
<dbReference type="PANTHER" id="PTHR12598">
    <property type="entry name" value="COPPER HOMEOSTASIS PROTEIN CUTC"/>
    <property type="match status" value="1"/>
</dbReference>
<dbReference type="PANTHER" id="PTHR12598:SF0">
    <property type="entry name" value="COPPER HOMEOSTASIS PROTEIN CUTC HOMOLOG"/>
    <property type="match status" value="1"/>
</dbReference>
<dbReference type="Pfam" id="PF03932">
    <property type="entry name" value="CutC"/>
    <property type="match status" value="1"/>
</dbReference>
<dbReference type="SUPFAM" id="SSF110395">
    <property type="entry name" value="CutC-like"/>
    <property type="match status" value="1"/>
</dbReference>